<accession>Q1GBU7</accession>
<organism>
    <name type="scientific">Lactobacillus delbrueckii subsp. bulgaricus (strain ATCC 11842 / DSM 20081 / BCRC 10696 / JCM 1002 / NBRC 13953 / NCIMB 11778 / NCTC 12712 / WDCM 00102 / Lb 14)</name>
    <dbReference type="NCBI Taxonomy" id="390333"/>
    <lineage>
        <taxon>Bacteria</taxon>
        <taxon>Bacillati</taxon>
        <taxon>Bacillota</taxon>
        <taxon>Bacilli</taxon>
        <taxon>Lactobacillales</taxon>
        <taxon>Lactobacillaceae</taxon>
        <taxon>Lactobacillus</taxon>
    </lineage>
</organism>
<sequence>MAKIDLSNFDKIIVLDFGSQYNQLITRRIRDFGIYSELLPHTITAEEVKKIAPKGIIFSGGPNSVYDENALDVDPEIFELGIPILGICYGMQLMTQKLGGTVEKAGEAEYGSAHIEVKEADSPLYKGLPEKQVVWMSHGDLVTKVPEGFEVLASSKNCPIASMADPDRKFYAVQFHAEVRNSEYGLDILRRFAFDVCGAKDNWTMDDFIKLSVDSIREEVGNANVILGISGGVDSSVTATLLHKAIGSQLTAIFVDHGLLRKNESDEVMAALKEGLGVNIVRVDAKDRFMSKLAGVTDPEKKRKIIGNEFVQVFNDEAKKIKDAKFLAQGTLYTDVIESGTDTAHTIKSHHNVGGLPEDMQFKLIEPLRQLFKDEVRVLGEKLGLPHDLVWRQPFPGPGLAIRVIGEITEEKLRIVRDADAILREEVKNAGLQESIWQYFVALPGMRSVGVMGDGRTYDYAVCIRAVTSIDGMTADFAQIPWDVLQKISVRIVNEVKQVNRVLYDVTSKPPATIEYE</sequence>
<name>GUAA_LACDA</name>
<proteinExistence type="inferred from homology"/>
<evidence type="ECO:0000255" key="1">
    <source>
        <dbReference type="HAMAP-Rule" id="MF_00344"/>
    </source>
</evidence>
<feature type="chain" id="PRO_1000120326" description="GMP synthase [glutamine-hydrolyzing]">
    <location>
        <begin position="1"/>
        <end position="517"/>
    </location>
</feature>
<feature type="domain" description="Glutamine amidotransferase type-1" evidence="1">
    <location>
        <begin position="11"/>
        <end position="202"/>
    </location>
</feature>
<feature type="domain" description="GMPS ATP-PPase" evidence="1">
    <location>
        <begin position="203"/>
        <end position="392"/>
    </location>
</feature>
<feature type="active site" description="Nucleophile" evidence="1">
    <location>
        <position position="88"/>
    </location>
</feature>
<feature type="active site" evidence="1">
    <location>
        <position position="176"/>
    </location>
</feature>
<feature type="active site" evidence="1">
    <location>
        <position position="178"/>
    </location>
</feature>
<feature type="binding site" evidence="1">
    <location>
        <begin position="230"/>
        <end position="236"/>
    </location>
    <ligand>
        <name>ATP</name>
        <dbReference type="ChEBI" id="CHEBI:30616"/>
    </ligand>
</feature>
<comment type="function">
    <text evidence="1">Catalyzes the synthesis of GMP from XMP.</text>
</comment>
<comment type="catalytic activity">
    <reaction evidence="1">
        <text>XMP + L-glutamine + ATP + H2O = GMP + L-glutamate + AMP + diphosphate + 2 H(+)</text>
        <dbReference type="Rhea" id="RHEA:11680"/>
        <dbReference type="ChEBI" id="CHEBI:15377"/>
        <dbReference type="ChEBI" id="CHEBI:15378"/>
        <dbReference type="ChEBI" id="CHEBI:29985"/>
        <dbReference type="ChEBI" id="CHEBI:30616"/>
        <dbReference type="ChEBI" id="CHEBI:33019"/>
        <dbReference type="ChEBI" id="CHEBI:57464"/>
        <dbReference type="ChEBI" id="CHEBI:58115"/>
        <dbReference type="ChEBI" id="CHEBI:58359"/>
        <dbReference type="ChEBI" id="CHEBI:456215"/>
        <dbReference type="EC" id="6.3.5.2"/>
    </reaction>
</comment>
<comment type="pathway">
    <text evidence="1">Purine metabolism; GMP biosynthesis; GMP from XMP (L-Gln route): step 1/1.</text>
</comment>
<comment type="subunit">
    <text evidence="1">Homodimer.</text>
</comment>
<reference key="1">
    <citation type="journal article" date="2006" name="Proc. Natl. Acad. Sci. U.S.A.">
        <title>The complete genome sequence of Lactobacillus bulgaricus reveals extensive and ongoing reductive evolution.</title>
        <authorList>
            <person name="van de Guchte M."/>
            <person name="Penaud S."/>
            <person name="Grimaldi C."/>
            <person name="Barbe V."/>
            <person name="Bryson K."/>
            <person name="Nicolas P."/>
            <person name="Robert C."/>
            <person name="Oztas S."/>
            <person name="Mangenot S."/>
            <person name="Couloux A."/>
            <person name="Loux V."/>
            <person name="Dervyn R."/>
            <person name="Bossy R."/>
            <person name="Bolotin A."/>
            <person name="Batto J.-M."/>
            <person name="Walunas T."/>
            <person name="Gibrat J.-F."/>
            <person name="Bessieres P."/>
            <person name="Weissenbach J."/>
            <person name="Ehrlich S.D."/>
            <person name="Maguin E."/>
        </authorList>
    </citation>
    <scope>NUCLEOTIDE SEQUENCE [LARGE SCALE GENOMIC DNA]</scope>
    <source>
        <strain>ATCC 11842 / DSM 20081 / BCRC 10696 / JCM 1002 / NBRC 13953 / NCIMB 11778 / NCTC 12712 / WDCM 00102 / Lb 14</strain>
    </source>
</reference>
<gene>
    <name evidence="1" type="primary">guaA</name>
    <name type="ordered locus">Ldb0298</name>
</gene>
<keyword id="KW-0067">ATP-binding</keyword>
<keyword id="KW-0315">Glutamine amidotransferase</keyword>
<keyword id="KW-0332">GMP biosynthesis</keyword>
<keyword id="KW-0436">Ligase</keyword>
<keyword id="KW-0547">Nucleotide-binding</keyword>
<keyword id="KW-0658">Purine biosynthesis</keyword>
<keyword id="KW-1185">Reference proteome</keyword>
<dbReference type="EC" id="6.3.5.2" evidence="1"/>
<dbReference type="EMBL" id="CR954253">
    <property type="protein sequence ID" value="CAI97137.1"/>
    <property type="molecule type" value="Genomic_DNA"/>
</dbReference>
<dbReference type="RefSeq" id="WP_003619442.1">
    <property type="nucleotide sequence ID" value="NZ_JQAV01000010.1"/>
</dbReference>
<dbReference type="SMR" id="Q1GBU7"/>
<dbReference type="STRING" id="390333.Ldb0298"/>
<dbReference type="MEROPS" id="C26.957"/>
<dbReference type="KEGG" id="ldb:Ldb0298"/>
<dbReference type="PATRIC" id="fig|390333.13.peg.486"/>
<dbReference type="eggNOG" id="COG0519">
    <property type="taxonomic scope" value="Bacteria"/>
</dbReference>
<dbReference type="HOGENOM" id="CLU_014340_0_5_9"/>
<dbReference type="BioCyc" id="LDEL390333:LDB_RS01225-MONOMER"/>
<dbReference type="UniPathway" id="UPA00189">
    <property type="reaction ID" value="UER00296"/>
</dbReference>
<dbReference type="Proteomes" id="UP000001259">
    <property type="component" value="Chromosome"/>
</dbReference>
<dbReference type="GO" id="GO:0005829">
    <property type="term" value="C:cytosol"/>
    <property type="evidence" value="ECO:0007669"/>
    <property type="project" value="TreeGrafter"/>
</dbReference>
<dbReference type="GO" id="GO:0005524">
    <property type="term" value="F:ATP binding"/>
    <property type="evidence" value="ECO:0007669"/>
    <property type="project" value="UniProtKB-UniRule"/>
</dbReference>
<dbReference type="GO" id="GO:0003921">
    <property type="term" value="F:GMP synthase activity"/>
    <property type="evidence" value="ECO:0007669"/>
    <property type="project" value="InterPro"/>
</dbReference>
<dbReference type="CDD" id="cd01742">
    <property type="entry name" value="GATase1_GMP_Synthase"/>
    <property type="match status" value="1"/>
</dbReference>
<dbReference type="CDD" id="cd01997">
    <property type="entry name" value="GMP_synthase_C"/>
    <property type="match status" value="1"/>
</dbReference>
<dbReference type="FunFam" id="3.30.300.10:FF:000002">
    <property type="entry name" value="GMP synthase [glutamine-hydrolyzing]"/>
    <property type="match status" value="1"/>
</dbReference>
<dbReference type="FunFam" id="3.40.50.620:FF:000001">
    <property type="entry name" value="GMP synthase [glutamine-hydrolyzing]"/>
    <property type="match status" value="1"/>
</dbReference>
<dbReference type="FunFam" id="3.40.50.880:FF:000001">
    <property type="entry name" value="GMP synthase [glutamine-hydrolyzing]"/>
    <property type="match status" value="1"/>
</dbReference>
<dbReference type="Gene3D" id="3.30.300.10">
    <property type="match status" value="1"/>
</dbReference>
<dbReference type="Gene3D" id="3.40.50.880">
    <property type="match status" value="1"/>
</dbReference>
<dbReference type="Gene3D" id="3.40.50.620">
    <property type="entry name" value="HUPs"/>
    <property type="match status" value="1"/>
</dbReference>
<dbReference type="HAMAP" id="MF_00344">
    <property type="entry name" value="GMP_synthase"/>
    <property type="match status" value="1"/>
</dbReference>
<dbReference type="InterPro" id="IPR029062">
    <property type="entry name" value="Class_I_gatase-like"/>
</dbReference>
<dbReference type="InterPro" id="IPR017926">
    <property type="entry name" value="GATASE"/>
</dbReference>
<dbReference type="InterPro" id="IPR001674">
    <property type="entry name" value="GMP_synth_C"/>
</dbReference>
<dbReference type="InterPro" id="IPR004739">
    <property type="entry name" value="GMP_synth_GATase"/>
</dbReference>
<dbReference type="InterPro" id="IPR022955">
    <property type="entry name" value="GMP_synthase"/>
</dbReference>
<dbReference type="InterPro" id="IPR025777">
    <property type="entry name" value="GMPS_ATP_PPase_dom"/>
</dbReference>
<dbReference type="InterPro" id="IPR022310">
    <property type="entry name" value="NAD/GMP_synthase"/>
</dbReference>
<dbReference type="InterPro" id="IPR014729">
    <property type="entry name" value="Rossmann-like_a/b/a_fold"/>
</dbReference>
<dbReference type="NCBIfam" id="TIGR00884">
    <property type="entry name" value="guaA_Cterm"/>
    <property type="match status" value="1"/>
</dbReference>
<dbReference type="NCBIfam" id="TIGR00888">
    <property type="entry name" value="guaA_Nterm"/>
    <property type="match status" value="1"/>
</dbReference>
<dbReference type="NCBIfam" id="NF000848">
    <property type="entry name" value="PRK00074.1"/>
    <property type="match status" value="1"/>
</dbReference>
<dbReference type="PANTHER" id="PTHR11922:SF2">
    <property type="entry name" value="GMP SYNTHASE [GLUTAMINE-HYDROLYZING]"/>
    <property type="match status" value="1"/>
</dbReference>
<dbReference type="PANTHER" id="PTHR11922">
    <property type="entry name" value="GMP SYNTHASE-RELATED"/>
    <property type="match status" value="1"/>
</dbReference>
<dbReference type="Pfam" id="PF00117">
    <property type="entry name" value="GATase"/>
    <property type="match status" value="1"/>
</dbReference>
<dbReference type="Pfam" id="PF00958">
    <property type="entry name" value="GMP_synt_C"/>
    <property type="match status" value="1"/>
</dbReference>
<dbReference type="Pfam" id="PF02540">
    <property type="entry name" value="NAD_synthase"/>
    <property type="match status" value="1"/>
</dbReference>
<dbReference type="PRINTS" id="PR00099">
    <property type="entry name" value="CPSGATASE"/>
</dbReference>
<dbReference type="PRINTS" id="PR00096">
    <property type="entry name" value="GATASE"/>
</dbReference>
<dbReference type="SUPFAM" id="SSF52402">
    <property type="entry name" value="Adenine nucleotide alpha hydrolases-like"/>
    <property type="match status" value="1"/>
</dbReference>
<dbReference type="SUPFAM" id="SSF52317">
    <property type="entry name" value="Class I glutamine amidotransferase-like"/>
    <property type="match status" value="1"/>
</dbReference>
<dbReference type="PROSITE" id="PS51273">
    <property type="entry name" value="GATASE_TYPE_1"/>
    <property type="match status" value="1"/>
</dbReference>
<dbReference type="PROSITE" id="PS51553">
    <property type="entry name" value="GMPS_ATP_PPASE"/>
    <property type="match status" value="1"/>
</dbReference>
<protein>
    <recommendedName>
        <fullName evidence="1">GMP synthase [glutamine-hydrolyzing]</fullName>
        <ecNumber evidence="1">6.3.5.2</ecNumber>
    </recommendedName>
    <alternativeName>
        <fullName evidence="1">GMP synthetase</fullName>
    </alternativeName>
    <alternativeName>
        <fullName evidence="1">Glutamine amidotransferase</fullName>
    </alternativeName>
</protein>